<evidence type="ECO:0000255" key="1">
    <source>
        <dbReference type="HAMAP-Rule" id="MF_00187"/>
    </source>
</evidence>
<protein>
    <recommendedName>
        <fullName evidence="1">Sulfur carrier protein FdhD</fullName>
    </recommendedName>
</protein>
<organism>
    <name type="scientific">Brucella melitensis biotype 1 (strain ATCC 23456 / CCUG 17765 / NCTC 10094 / 16M)</name>
    <dbReference type="NCBI Taxonomy" id="224914"/>
    <lineage>
        <taxon>Bacteria</taxon>
        <taxon>Pseudomonadati</taxon>
        <taxon>Pseudomonadota</taxon>
        <taxon>Alphaproteobacteria</taxon>
        <taxon>Hyphomicrobiales</taxon>
        <taxon>Brucellaceae</taxon>
        <taxon>Brucella/Ochrobactrum group</taxon>
        <taxon>Brucella</taxon>
    </lineage>
</organism>
<proteinExistence type="inferred from homology"/>
<gene>
    <name evidence="1" type="primary">fdhD</name>
    <name type="ordered locus">BMEII0588</name>
</gene>
<feature type="chain" id="PRO_0000152894" description="Sulfur carrier protein FdhD">
    <location>
        <begin position="1"/>
        <end position="269"/>
    </location>
</feature>
<feature type="active site" description="Cysteine persulfide intermediate" evidence="1">
    <location>
        <position position="111"/>
    </location>
</feature>
<name>FDHD_BRUME</name>
<reference key="1">
    <citation type="journal article" date="2002" name="Proc. Natl. Acad. Sci. U.S.A.">
        <title>The genome sequence of the facultative intracellular pathogen Brucella melitensis.</title>
        <authorList>
            <person name="DelVecchio V.G."/>
            <person name="Kapatral V."/>
            <person name="Redkar R.J."/>
            <person name="Patra G."/>
            <person name="Mujer C."/>
            <person name="Los T."/>
            <person name="Ivanova N."/>
            <person name="Anderson I."/>
            <person name="Bhattacharyya A."/>
            <person name="Lykidis A."/>
            <person name="Reznik G."/>
            <person name="Jablonski L."/>
            <person name="Larsen N."/>
            <person name="D'Souza M."/>
            <person name="Bernal A."/>
            <person name="Mazur M."/>
            <person name="Goltsman E."/>
            <person name="Selkov E."/>
            <person name="Elzer P.H."/>
            <person name="Hagius S."/>
            <person name="O'Callaghan D."/>
            <person name="Letesson J.-J."/>
            <person name="Haselkorn R."/>
            <person name="Kyrpides N.C."/>
            <person name="Overbeek R."/>
        </authorList>
    </citation>
    <scope>NUCLEOTIDE SEQUENCE [LARGE SCALE GENOMIC DNA]</scope>
    <source>
        <strain>ATCC 23456 / CCUG 17765 / NCTC 10094 / 16M</strain>
    </source>
</reference>
<keyword id="KW-0963">Cytoplasm</keyword>
<keyword id="KW-0501">Molybdenum cofactor biosynthesis</keyword>
<accession>Q8YCE3</accession>
<dbReference type="EMBL" id="AE008918">
    <property type="protein sequence ID" value="AAL53830.1"/>
    <property type="molecule type" value="Genomic_DNA"/>
</dbReference>
<dbReference type="PIR" id="AC3583">
    <property type="entry name" value="AC3583"/>
</dbReference>
<dbReference type="RefSeq" id="WP_004681982.1">
    <property type="nucleotide sequence ID" value="NZ_GG703779.1"/>
</dbReference>
<dbReference type="SMR" id="Q8YCE3"/>
<dbReference type="GeneID" id="29595913"/>
<dbReference type="KEGG" id="bme:BMEII0588"/>
<dbReference type="KEGG" id="bmel:DK63_2657"/>
<dbReference type="PATRIC" id="fig|224914.52.peg.2785"/>
<dbReference type="eggNOG" id="COG1526">
    <property type="taxonomic scope" value="Bacteria"/>
</dbReference>
<dbReference type="Proteomes" id="UP000000419">
    <property type="component" value="Chromosome II"/>
</dbReference>
<dbReference type="GO" id="GO:0005737">
    <property type="term" value="C:cytoplasm"/>
    <property type="evidence" value="ECO:0007669"/>
    <property type="project" value="UniProtKB-SubCell"/>
</dbReference>
<dbReference type="GO" id="GO:0097163">
    <property type="term" value="F:sulfur carrier activity"/>
    <property type="evidence" value="ECO:0007669"/>
    <property type="project" value="UniProtKB-UniRule"/>
</dbReference>
<dbReference type="GO" id="GO:0016783">
    <property type="term" value="F:sulfurtransferase activity"/>
    <property type="evidence" value="ECO:0007669"/>
    <property type="project" value="InterPro"/>
</dbReference>
<dbReference type="GO" id="GO:0006777">
    <property type="term" value="P:Mo-molybdopterin cofactor biosynthetic process"/>
    <property type="evidence" value="ECO:0007669"/>
    <property type="project" value="UniProtKB-UniRule"/>
</dbReference>
<dbReference type="Gene3D" id="3.10.20.10">
    <property type="match status" value="1"/>
</dbReference>
<dbReference type="Gene3D" id="3.40.140.10">
    <property type="entry name" value="Cytidine Deaminase, domain 2"/>
    <property type="match status" value="1"/>
</dbReference>
<dbReference type="HAMAP" id="MF_00187">
    <property type="entry name" value="FdhD"/>
    <property type="match status" value="1"/>
</dbReference>
<dbReference type="InterPro" id="IPR016193">
    <property type="entry name" value="Cytidine_deaminase-like"/>
</dbReference>
<dbReference type="InterPro" id="IPR003786">
    <property type="entry name" value="FdhD"/>
</dbReference>
<dbReference type="NCBIfam" id="TIGR00129">
    <property type="entry name" value="fdhD_narQ"/>
    <property type="match status" value="1"/>
</dbReference>
<dbReference type="PANTHER" id="PTHR30592">
    <property type="entry name" value="FORMATE DEHYDROGENASE"/>
    <property type="match status" value="1"/>
</dbReference>
<dbReference type="PANTHER" id="PTHR30592:SF1">
    <property type="entry name" value="SULFUR CARRIER PROTEIN FDHD"/>
    <property type="match status" value="1"/>
</dbReference>
<dbReference type="Pfam" id="PF02634">
    <property type="entry name" value="FdhD-NarQ"/>
    <property type="match status" value="1"/>
</dbReference>
<dbReference type="PIRSF" id="PIRSF015626">
    <property type="entry name" value="FdhD"/>
    <property type="match status" value="1"/>
</dbReference>
<dbReference type="SUPFAM" id="SSF53927">
    <property type="entry name" value="Cytidine deaminase-like"/>
    <property type="match status" value="1"/>
</dbReference>
<sequence>MTNQKISRDVHHLAHRMSGFQESSRIVPEEAPIAMSYNGTTQAVMMATPGDLEDFAIGFSLTENIVTRIEEIEALDIVAFESGIDIQMKLAKQPEQRLSARRRFMAGQVGCGLCGIDSIEQALRPLHPLEECSTTFTTRDIAAAVASLGAAQALNAKTHATHGAGFFRPGEGLFAVREDIGRHNALDKLIGAVAREGLLAEEGIVAITSRVSVEMVQKAVMLGVPVLAAISAPTALAIRTAEAANLTLVALVRDEEFDIYTHCGRIIEG</sequence>
<comment type="function">
    <text evidence="1">Required for formate dehydrogenase (FDH) activity. Acts as a sulfur carrier protein that transfers sulfur from IscS to the molybdenum cofactor prior to its insertion into FDH.</text>
</comment>
<comment type="subcellular location">
    <subcellularLocation>
        <location evidence="1">Cytoplasm</location>
    </subcellularLocation>
</comment>
<comment type="similarity">
    <text evidence="1">Belongs to the FdhD family.</text>
</comment>